<reference key="1">
    <citation type="journal article" date="2005" name="Nucleic Acids Res.">
        <title>Genome dynamics and diversity of Shigella species, the etiologic agents of bacillary dysentery.</title>
        <authorList>
            <person name="Yang F."/>
            <person name="Yang J."/>
            <person name="Zhang X."/>
            <person name="Chen L."/>
            <person name="Jiang Y."/>
            <person name="Yan Y."/>
            <person name="Tang X."/>
            <person name="Wang J."/>
            <person name="Xiong Z."/>
            <person name="Dong J."/>
            <person name="Xue Y."/>
            <person name="Zhu Y."/>
            <person name="Xu X."/>
            <person name="Sun L."/>
            <person name="Chen S."/>
            <person name="Nie H."/>
            <person name="Peng J."/>
            <person name="Xu J."/>
            <person name="Wang Y."/>
            <person name="Yuan Z."/>
            <person name="Wen Y."/>
            <person name="Yao Z."/>
            <person name="Shen Y."/>
            <person name="Qiang B."/>
            <person name="Hou Y."/>
            <person name="Yu J."/>
            <person name="Jin Q."/>
        </authorList>
    </citation>
    <scope>NUCLEOTIDE SEQUENCE [LARGE SCALE GENOMIC DNA]</scope>
    <source>
        <strain>Ss046</strain>
    </source>
</reference>
<sequence length="38" mass="4364">MKVRASVKKLCRNCKIVKRDGVIRVICSAEPKHKQRQG</sequence>
<accession>Q3YWW0</accession>
<evidence type="ECO:0000255" key="1">
    <source>
        <dbReference type="HAMAP-Rule" id="MF_00251"/>
    </source>
</evidence>
<evidence type="ECO:0000305" key="2"/>
<organism>
    <name type="scientific">Shigella sonnei (strain Ss046)</name>
    <dbReference type="NCBI Taxonomy" id="300269"/>
    <lineage>
        <taxon>Bacteria</taxon>
        <taxon>Pseudomonadati</taxon>
        <taxon>Pseudomonadota</taxon>
        <taxon>Gammaproteobacteria</taxon>
        <taxon>Enterobacterales</taxon>
        <taxon>Enterobacteriaceae</taxon>
        <taxon>Shigella</taxon>
    </lineage>
</organism>
<feature type="chain" id="PRO_0000302299" description="Large ribosomal subunit protein bL36">
    <location>
        <begin position="1"/>
        <end position="38"/>
    </location>
</feature>
<gene>
    <name evidence="1" type="primary">rpmJ</name>
    <name type="ordered locus">SSON_3440</name>
</gene>
<keyword id="KW-1185">Reference proteome</keyword>
<keyword id="KW-0687">Ribonucleoprotein</keyword>
<keyword id="KW-0689">Ribosomal protein</keyword>
<dbReference type="EMBL" id="CP000038">
    <property type="protein sequence ID" value="AAZ90002.1"/>
    <property type="molecule type" value="Genomic_DNA"/>
</dbReference>
<dbReference type="RefSeq" id="WP_000868187.1">
    <property type="nucleotide sequence ID" value="NC_007384.1"/>
</dbReference>
<dbReference type="SMR" id="Q3YWW0"/>
<dbReference type="GeneID" id="98390421"/>
<dbReference type="KEGG" id="ssn:SSON_3440"/>
<dbReference type="HOGENOM" id="CLU_135723_6_2_6"/>
<dbReference type="Proteomes" id="UP000002529">
    <property type="component" value="Chromosome"/>
</dbReference>
<dbReference type="GO" id="GO:0005737">
    <property type="term" value="C:cytoplasm"/>
    <property type="evidence" value="ECO:0007669"/>
    <property type="project" value="UniProtKB-ARBA"/>
</dbReference>
<dbReference type="GO" id="GO:1990904">
    <property type="term" value="C:ribonucleoprotein complex"/>
    <property type="evidence" value="ECO:0007669"/>
    <property type="project" value="UniProtKB-KW"/>
</dbReference>
<dbReference type="GO" id="GO:0005840">
    <property type="term" value="C:ribosome"/>
    <property type="evidence" value="ECO:0007669"/>
    <property type="project" value="UniProtKB-KW"/>
</dbReference>
<dbReference type="GO" id="GO:0003735">
    <property type="term" value="F:structural constituent of ribosome"/>
    <property type="evidence" value="ECO:0007669"/>
    <property type="project" value="InterPro"/>
</dbReference>
<dbReference type="GO" id="GO:0006412">
    <property type="term" value="P:translation"/>
    <property type="evidence" value="ECO:0007669"/>
    <property type="project" value="UniProtKB-UniRule"/>
</dbReference>
<dbReference type="HAMAP" id="MF_00251">
    <property type="entry name" value="Ribosomal_bL36"/>
    <property type="match status" value="1"/>
</dbReference>
<dbReference type="InterPro" id="IPR000473">
    <property type="entry name" value="Ribosomal_bL36"/>
</dbReference>
<dbReference type="InterPro" id="IPR035977">
    <property type="entry name" value="Ribosomal_bL36_sp"/>
</dbReference>
<dbReference type="NCBIfam" id="TIGR01022">
    <property type="entry name" value="rpmJ_bact"/>
    <property type="match status" value="1"/>
</dbReference>
<dbReference type="PANTHER" id="PTHR42888">
    <property type="entry name" value="50S RIBOSOMAL PROTEIN L36, CHLOROPLASTIC"/>
    <property type="match status" value="1"/>
</dbReference>
<dbReference type="PANTHER" id="PTHR42888:SF1">
    <property type="entry name" value="LARGE RIBOSOMAL SUBUNIT PROTEIN BL36C"/>
    <property type="match status" value="1"/>
</dbReference>
<dbReference type="Pfam" id="PF00444">
    <property type="entry name" value="Ribosomal_L36"/>
    <property type="match status" value="1"/>
</dbReference>
<dbReference type="SUPFAM" id="SSF57840">
    <property type="entry name" value="Ribosomal protein L36"/>
    <property type="match status" value="1"/>
</dbReference>
<dbReference type="PROSITE" id="PS00828">
    <property type="entry name" value="RIBOSOMAL_L36"/>
    <property type="match status" value="1"/>
</dbReference>
<protein>
    <recommendedName>
        <fullName evidence="1">Large ribosomal subunit protein bL36</fullName>
    </recommendedName>
    <alternativeName>
        <fullName evidence="2">50S ribosomal protein L36</fullName>
    </alternativeName>
</protein>
<comment type="similarity">
    <text evidence="1">Belongs to the bacterial ribosomal protein bL36 family.</text>
</comment>
<proteinExistence type="inferred from homology"/>
<name>RL36_SHISS</name>